<feature type="chain" id="PRO_1000093053" description="S-adenosylmethionine synthase">
    <location>
        <begin position="1"/>
        <end position="385"/>
    </location>
</feature>
<feature type="region of interest" description="Flexible loop" evidence="1">
    <location>
        <begin position="100"/>
        <end position="110"/>
    </location>
</feature>
<feature type="binding site" description="in other chain" evidence="1">
    <location>
        <position position="16"/>
    </location>
    <ligand>
        <name>ATP</name>
        <dbReference type="ChEBI" id="CHEBI:30616"/>
        <note>ligand shared between two neighboring subunits</note>
    </ligand>
</feature>
<feature type="binding site" evidence="1">
    <location>
        <position position="18"/>
    </location>
    <ligand>
        <name>Mg(2+)</name>
        <dbReference type="ChEBI" id="CHEBI:18420"/>
    </ligand>
</feature>
<feature type="binding site" evidence="1">
    <location>
        <position position="44"/>
    </location>
    <ligand>
        <name>K(+)</name>
        <dbReference type="ChEBI" id="CHEBI:29103"/>
    </ligand>
</feature>
<feature type="binding site" description="in other chain" evidence="1">
    <location>
        <position position="57"/>
    </location>
    <ligand>
        <name>L-methionine</name>
        <dbReference type="ChEBI" id="CHEBI:57844"/>
        <note>ligand shared between two neighboring subunits</note>
    </ligand>
</feature>
<feature type="binding site" description="in other chain" evidence="1">
    <location>
        <position position="100"/>
    </location>
    <ligand>
        <name>L-methionine</name>
        <dbReference type="ChEBI" id="CHEBI:57844"/>
        <note>ligand shared between two neighboring subunits</note>
    </ligand>
</feature>
<feature type="binding site" description="in other chain" evidence="1">
    <location>
        <begin position="164"/>
        <end position="166"/>
    </location>
    <ligand>
        <name>ATP</name>
        <dbReference type="ChEBI" id="CHEBI:30616"/>
        <note>ligand shared between two neighboring subunits</note>
    </ligand>
</feature>
<feature type="binding site" description="in other chain" evidence="1">
    <location>
        <begin position="230"/>
        <end position="231"/>
    </location>
    <ligand>
        <name>ATP</name>
        <dbReference type="ChEBI" id="CHEBI:30616"/>
        <note>ligand shared between two neighboring subunits</note>
    </ligand>
</feature>
<feature type="binding site" evidence="1">
    <location>
        <position position="239"/>
    </location>
    <ligand>
        <name>ATP</name>
        <dbReference type="ChEBI" id="CHEBI:30616"/>
        <note>ligand shared between two neighboring subunits</note>
    </ligand>
</feature>
<feature type="binding site" evidence="1">
    <location>
        <position position="239"/>
    </location>
    <ligand>
        <name>L-methionine</name>
        <dbReference type="ChEBI" id="CHEBI:57844"/>
        <note>ligand shared between two neighboring subunits</note>
    </ligand>
</feature>
<feature type="binding site" description="in other chain" evidence="1">
    <location>
        <begin position="245"/>
        <end position="246"/>
    </location>
    <ligand>
        <name>ATP</name>
        <dbReference type="ChEBI" id="CHEBI:30616"/>
        <note>ligand shared between two neighboring subunits</note>
    </ligand>
</feature>
<feature type="binding site" evidence="1">
    <location>
        <position position="262"/>
    </location>
    <ligand>
        <name>ATP</name>
        <dbReference type="ChEBI" id="CHEBI:30616"/>
        <note>ligand shared between two neighboring subunits</note>
    </ligand>
</feature>
<feature type="binding site" evidence="1">
    <location>
        <position position="266"/>
    </location>
    <ligand>
        <name>ATP</name>
        <dbReference type="ChEBI" id="CHEBI:30616"/>
        <note>ligand shared between two neighboring subunits</note>
    </ligand>
</feature>
<feature type="binding site" description="in other chain" evidence="1">
    <location>
        <position position="270"/>
    </location>
    <ligand>
        <name>L-methionine</name>
        <dbReference type="ChEBI" id="CHEBI:57844"/>
        <note>ligand shared between two neighboring subunits</note>
    </ligand>
</feature>
<evidence type="ECO:0000255" key="1">
    <source>
        <dbReference type="HAMAP-Rule" id="MF_00086"/>
    </source>
</evidence>
<reference key="1">
    <citation type="journal article" date="2009" name="J. Bacteriol.">
        <title>The complete genome sequence of Helicobacter pylori strain G27.</title>
        <authorList>
            <person name="Baltrus D.A."/>
            <person name="Amieva M.R."/>
            <person name="Covacci A."/>
            <person name="Lowe T.M."/>
            <person name="Merrell D.S."/>
            <person name="Ottemann K.M."/>
            <person name="Stein M."/>
            <person name="Salama N.R."/>
            <person name="Guillemin K."/>
        </authorList>
    </citation>
    <scope>NUCLEOTIDE SEQUENCE [LARGE SCALE GENOMIC DNA]</scope>
    <source>
        <strain>G27</strain>
    </source>
</reference>
<comment type="function">
    <text evidence="1">Catalyzes the formation of S-adenosylmethionine (AdoMet) from methionine and ATP. The overall synthetic reaction is composed of two sequential steps, AdoMet formation and the subsequent tripolyphosphate hydrolysis which occurs prior to release of AdoMet from the enzyme.</text>
</comment>
<comment type="catalytic activity">
    <reaction evidence="1">
        <text>L-methionine + ATP + H2O = S-adenosyl-L-methionine + phosphate + diphosphate</text>
        <dbReference type="Rhea" id="RHEA:21080"/>
        <dbReference type="ChEBI" id="CHEBI:15377"/>
        <dbReference type="ChEBI" id="CHEBI:30616"/>
        <dbReference type="ChEBI" id="CHEBI:33019"/>
        <dbReference type="ChEBI" id="CHEBI:43474"/>
        <dbReference type="ChEBI" id="CHEBI:57844"/>
        <dbReference type="ChEBI" id="CHEBI:59789"/>
        <dbReference type="EC" id="2.5.1.6"/>
    </reaction>
</comment>
<comment type="cofactor">
    <cofactor evidence="1">
        <name>Mg(2+)</name>
        <dbReference type="ChEBI" id="CHEBI:18420"/>
    </cofactor>
    <text evidence="1">Binds 2 divalent ions per subunit.</text>
</comment>
<comment type="cofactor">
    <cofactor evidence="1">
        <name>K(+)</name>
        <dbReference type="ChEBI" id="CHEBI:29103"/>
    </cofactor>
    <text evidence="1">Binds 1 potassium ion per subunit.</text>
</comment>
<comment type="pathway">
    <text evidence="1">Amino-acid biosynthesis; S-adenosyl-L-methionine biosynthesis; S-adenosyl-L-methionine from L-methionine: step 1/1.</text>
</comment>
<comment type="subunit">
    <text evidence="1">Homotetramer; dimer of dimers.</text>
</comment>
<comment type="subcellular location">
    <subcellularLocation>
        <location evidence="1">Cytoplasm</location>
    </subcellularLocation>
</comment>
<comment type="similarity">
    <text evidence="1">Belongs to the AdoMet synthase family.</text>
</comment>
<accession>B5Z9W8</accession>
<dbReference type="EC" id="2.5.1.6" evidence="1"/>
<dbReference type="EMBL" id="CP001173">
    <property type="protein sequence ID" value="ACI26948.1"/>
    <property type="molecule type" value="Genomic_DNA"/>
</dbReference>
<dbReference type="RefSeq" id="WP_000655168.1">
    <property type="nucleotide sequence ID" value="NC_011333.1"/>
</dbReference>
<dbReference type="SMR" id="B5Z9W8"/>
<dbReference type="GeneID" id="93236563"/>
<dbReference type="KEGG" id="hpg:HPG27_181"/>
<dbReference type="HOGENOM" id="CLU_041802_1_1_7"/>
<dbReference type="UniPathway" id="UPA00315">
    <property type="reaction ID" value="UER00080"/>
</dbReference>
<dbReference type="Proteomes" id="UP000001735">
    <property type="component" value="Chromosome"/>
</dbReference>
<dbReference type="GO" id="GO:0005737">
    <property type="term" value="C:cytoplasm"/>
    <property type="evidence" value="ECO:0007669"/>
    <property type="project" value="UniProtKB-SubCell"/>
</dbReference>
<dbReference type="GO" id="GO:0005524">
    <property type="term" value="F:ATP binding"/>
    <property type="evidence" value="ECO:0007669"/>
    <property type="project" value="UniProtKB-UniRule"/>
</dbReference>
<dbReference type="GO" id="GO:0000287">
    <property type="term" value="F:magnesium ion binding"/>
    <property type="evidence" value="ECO:0007669"/>
    <property type="project" value="UniProtKB-UniRule"/>
</dbReference>
<dbReference type="GO" id="GO:0004478">
    <property type="term" value="F:methionine adenosyltransferase activity"/>
    <property type="evidence" value="ECO:0007669"/>
    <property type="project" value="UniProtKB-UniRule"/>
</dbReference>
<dbReference type="GO" id="GO:0006730">
    <property type="term" value="P:one-carbon metabolic process"/>
    <property type="evidence" value="ECO:0007669"/>
    <property type="project" value="UniProtKB-KW"/>
</dbReference>
<dbReference type="GO" id="GO:0006556">
    <property type="term" value="P:S-adenosylmethionine biosynthetic process"/>
    <property type="evidence" value="ECO:0007669"/>
    <property type="project" value="UniProtKB-UniRule"/>
</dbReference>
<dbReference type="CDD" id="cd18079">
    <property type="entry name" value="S-AdoMet_synt"/>
    <property type="match status" value="1"/>
</dbReference>
<dbReference type="FunFam" id="3.30.300.10:FF:000003">
    <property type="entry name" value="S-adenosylmethionine synthase"/>
    <property type="match status" value="1"/>
</dbReference>
<dbReference type="Gene3D" id="3.30.300.10">
    <property type="match status" value="3"/>
</dbReference>
<dbReference type="HAMAP" id="MF_00086">
    <property type="entry name" value="S_AdoMet_synth1"/>
    <property type="match status" value="1"/>
</dbReference>
<dbReference type="InterPro" id="IPR022631">
    <property type="entry name" value="ADOMET_SYNTHASE_CS"/>
</dbReference>
<dbReference type="InterPro" id="IPR022630">
    <property type="entry name" value="S-AdoMet_synt_C"/>
</dbReference>
<dbReference type="InterPro" id="IPR022629">
    <property type="entry name" value="S-AdoMet_synt_central"/>
</dbReference>
<dbReference type="InterPro" id="IPR022628">
    <property type="entry name" value="S-AdoMet_synt_N"/>
</dbReference>
<dbReference type="InterPro" id="IPR002133">
    <property type="entry name" value="S-AdoMet_synthetase"/>
</dbReference>
<dbReference type="InterPro" id="IPR022636">
    <property type="entry name" value="S-AdoMet_synthetase_sfam"/>
</dbReference>
<dbReference type="NCBIfam" id="TIGR01034">
    <property type="entry name" value="metK"/>
    <property type="match status" value="1"/>
</dbReference>
<dbReference type="PANTHER" id="PTHR11964">
    <property type="entry name" value="S-ADENOSYLMETHIONINE SYNTHETASE"/>
    <property type="match status" value="1"/>
</dbReference>
<dbReference type="Pfam" id="PF02773">
    <property type="entry name" value="S-AdoMet_synt_C"/>
    <property type="match status" value="1"/>
</dbReference>
<dbReference type="Pfam" id="PF02772">
    <property type="entry name" value="S-AdoMet_synt_M"/>
    <property type="match status" value="1"/>
</dbReference>
<dbReference type="Pfam" id="PF00438">
    <property type="entry name" value="S-AdoMet_synt_N"/>
    <property type="match status" value="1"/>
</dbReference>
<dbReference type="PIRSF" id="PIRSF000497">
    <property type="entry name" value="MAT"/>
    <property type="match status" value="1"/>
</dbReference>
<dbReference type="SUPFAM" id="SSF55973">
    <property type="entry name" value="S-adenosylmethionine synthetase"/>
    <property type="match status" value="3"/>
</dbReference>
<dbReference type="PROSITE" id="PS00376">
    <property type="entry name" value="ADOMET_SYNTHASE_1"/>
    <property type="match status" value="1"/>
</dbReference>
<dbReference type="PROSITE" id="PS00377">
    <property type="entry name" value="ADOMET_SYNTHASE_2"/>
    <property type="match status" value="1"/>
</dbReference>
<protein>
    <recommendedName>
        <fullName evidence="1">S-adenosylmethionine synthase</fullName>
        <shortName evidence="1">AdoMet synthase</shortName>
        <ecNumber evidence="1">2.5.1.6</ecNumber>
    </recommendedName>
    <alternativeName>
        <fullName evidence="1">MAT</fullName>
    </alternativeName>
    <alternativeName>
        <fullName evidence="1">Methionine adenosyltransferase</fullName>
    </alternativeName>
</protein>
<proteinExistence type="inferred from homology"/>
<gene>
    <name evidence="1" type="primary">metK</name>
    <name type="ordered locus">HPG27_181</name>
</gene>
<sequence>MKDSFLFTSESVTEGHPDKMADQISDAVLDYIIERDQKAKVACETLVSNGFCMITGELKTSVYAPMQEIAREVVKKIGYTDALYGFDYRSAAVLNGVGEQSPDINQGVDREDGEIGAGDQGLMFGYACKETETLMPLPIHLAHQLTFALAQKRKDNTLPFLRPDGKSQVSVRYENNKPVSIDTIVISTQHSPEVSQKHLKEAVIEEIVYKVLPKEYLHDNIKFFVNPTGKFVIGGPQGDAGLTGRKIIVDTYGGSCPHGGGAFSGKDPSKVDRSAAYAARYVAKNLVASGVCDKATVQLAYAIGVIEPVSVYVNTHNTSKYSSAELEKCVKAVFKLTPKGIIESLDLLRPIYSLTSAYGHFGRELEEFTWEKTNKAEEIKAFFKR</sequence>
<organism>
    <name type="scientific">Helicobacter pylori (strain G27)</name>
    <dbReference type="NCBI Taxonomy" id="563041"/>
    <lineage>
        <taxon>Bacteria</taxon>
        <taxon>Pseudomonadati</taxon>
        <taxon>Campylobacterota</taxon>
        <taxon>Epsilonproteobacteria</taxon>
        <taxon>Campylobacterales</taxon>
        <taxon>Helicobacteraceae</taxon>
        <taxon>Helicobacter</taxon>
    </lineage>
</organism>
<name>METK_HELPG</name>
<keyword id="KW-0067">ATP-binding</keyword>
<keyword id="KW-0963">Cytoplasm</keyword>
<keyword id="KW-0460">Magnesium</keyword>
<keyword id="KW-0479">Metal-binding</keyword>
<keyword id="KW-0547">Nucleotide-binding</keyword>
<keyword id="KW-0554">One-carbon metabolism</keyword>
<keyword id="KW-0630">Potassium</keyword>
<keyword id="KW-1185">Reference proteome</keyword>
<keyword id="KW-0808">Transferase</keyword>